<dbReference type="EMBL" id="BA000016">
    <property type="protein sequence ID" value="BAB79835.1"/>
    <property type="molecule type" value="Genomic_DNA"/>
</dbReference>
<dbReference type="RefSeq" id="WP_003457548.1">
    <property type="nucleotide sequence ID" value="NC_003366.1"/>
</dbReference>
<dbReference type="STRING" id="195102.gene:10489373"/>
<dbReference type="KEGG" id="cpe:CPE0129"/>
<dbReference type="HOGENOM" id="CLU_033541_3_0_9"/>
<dbReference type="Proteomes" id="UP000000818">
    <property type="component" value="Chromosome"/>
</dbReference>
<dbReference type="GO" id="GO:0005886">
    <property type="term" value="C:plasma membrane"/>
    <property type="evidence" value="ECO:0007669"/>
    <property type="project" value="UniProtKB-SubCell"/>
</dbReference>
<dbReference type="InterPro" id="IPR018383">
    <property type="entry name" value="UPF0324_pro"/>
</dbReference>
<dbReference type="PANTHER" id="PTHR30106">
    <property type="entry name" value="INNER MEMBRANE PROTEIN YEIH-RELATED"/>
    <property type="match status" value="1"/>
</dbReference>
<dbReference type="PANTHER" id="PTHR30106:SF2">
    <property type="entry name" value="UPF0324 INNER MEMBRANE PROTEIN YEIH"/>
    <property type="match status" value="1"/>
</dbReference>
<dbReference type="Pfam" id="PF03601">
    <property type="entry name" value="Cons_hypoth698"/>
    <property type="match status" value="1"/>
</dbReference>
<sequence>MRNKILKKSKSILPGLFICLIIGIIAEFLGKSFPTIGAATFAIFMGIFLGNTLFKSDKYDEGTKFSEKDLLNYSIVLMGASLNIIDIMALGFNGVFYIAILMTLTICTTYFIGRKLGFGEKYSLLMSAGNAVCGSSAIGSVSPVIKAKDSDKVIAITIVNVTGTILMILLPLITSILYNNDVLQSSALMGGILQSVGQVIGSAKFIGDPVVELATVFKIIRIIFLVVVVLVFAKIEVNEENKEEIAHHHKPTHKVRIPWFIIGFFIICILNSIGIIPGILGRTFKWISSNFEIIALAGIGMRVKIGDLVKEGPKAMLYGGLVGVCQIIFALSLINIFIK</sequence>
<accession>Q8XP36</accession>
<reference key="1">
    <citation type="journal article" date="2002" name="Proc. Natl. Acad. Sci. U.S.A.">
        <title>Complete genome sequence of Clostridium perfringens, an anaerobic flesh-eater.</title>
        <authorList>
            <person name="Shimizu T."/>
            <person name="Ohtani K."/>
            <person name="Hirakawa H."/>
            <person name="Ohshima K."/>
            <person name="Yamashita A."/>
            <person name="Shiba T."/>
            <person name="Ogasawara N."/>
            <person name="Hattori M."/>
            <person name="Kuhara S."/>
            <person name="Hayashi H."/>
        </authorList>
    </citation>
    <scope>NUCLEOTIDE SEQUENCE [LARGE SCALE GENOMIC DNA]</scope>
    <source>
        <strain>13 / Type A</strain>
    </source>
</reference>
<gene>
    <name type="ordered locus">CPE0129</name>
</gene>
<proteinExistence type="inferred from homology"/>
<comment type="subcellular location">
    <subcellularLocation>
        <location evidence="2">Cell membrane</location>
        <topology evidence="2">Multi-pass membrane protein</topology>
    </subcellularLocation>
</comment>
<comment type="similarity">
    <text evidence="2">Belongs to the UPF0324 family.</text>
</comment>
<evidence type="ECO:0000255" key="1"/>
<evidence type="ECO:0000305" key="2"/>
<protein>
    <recommendedName>
        <fullName>UPF0324 membrane protein CPE0129</fullName>
    </recommendedName>
</protein>
<name>Y129_CLOPE</name>
<feature type="chain" id="PRO_0000157407" description="UPF0324 membrane protein CPE0129">
    <location>
        <begin position="1"/>
        <end position="339"/>
    </location>
</feature>
<feature type="transmembrane region" description="Helical" evidence="1">
    <location>
        <begin position="12"/>
        <end position="30"/>
    </location>
</feature>
<feature type="transmembrane region" description="Helical" evidence="1">
    <location>
        <begin position="35"/>
        <end position="54"/>
    </location>
</feature>
<feature type="transmembrane region" description="Helical" evidence="1">
    <location>
        <begin position="90"/>
        <end position="112"/>
    </location>
</feature>
<feature type="transmembrane region" description="Helical" evidence="1">
    <location>
        <begin position="122"/>
        <end position="144"/>
    </location>
</feature>
<feature type="transmembrane region" description="Helical" evidence="1">
    <location>
        <begin position="156"/>
        <end position="178"/>
    </location>
</feature>
<feature type="transmembrane region" description="Helical" evidence="1">
    <location>
        <begin position="210"/>
        <end position="232"/>
    </location>
</feature>
<feature type="transmembrane region" description="Helical" evidence="1">
    <location>
        <begin position="259"/>
        <end position="281"/>
    </location>
</feature>
<feature type="transmembrane region" description="Helical" evidence="1">
    <location>
        <begin position="316"/>
        <end position="338"/>
    </location>
</feature>
<organism>
    <name type="scientific">Clostridium perfringens (strain 13 / Type A)</name>
    <dbReference type="NCBI Taxonomy" id="195102"/>
    <lineage>
        <taxon>Bacteria</taxon>
        <taxon>Bacillati</taxon>
        <taxon>Bacillota</taxon>
        <taxon>Clostridia</taxon>
        <taxon>Eubacteriales</taxon>
        <taxon>Clostridiaceae</taxon>
        <taxon>Clostridium</taxon>
    </lineage>
</organism>
<keyword id="KW-1003">Cell membrane</keyword>
<keyword id="KW-0472">Membrane</keyword>
<keyword id="KW-1185">Reference proteome</keyword>
<keyword id="KW-0812">Transmembrane</keyword>
<keyword id="KW-1133">Transmembrane helix</keyword>